<comment type="function">
    <text evidence="1">Component of the cytochrome b6-f complex, which mediates electron transfer between photosystem II (PSII) and photosystem I (PSI), cyclic electron flow around PSI, and state transitions.</text>
</comment>
<comment type="subunit">
    <text evidence="1">The 4 large subunits of the cytochrome b6-f complex are cytochrome b6, subunit IV (17 kDa polypeptide, PetD), cytochrome f and the Rieske protein, while the 4 small subunits are PetG, PetL, PetM and PetN. The complex functions as a dimer.</text>
</comment>
<comment type="subcellular location">
    <subcellularLocation>
        <location evidence="1">Cellular thylakoid membrane</location>
        <topology evidence="1">Multi-pass membrane protein</topology>
    </subcellularLocation>
</comment>
<comment type="similarity">
    <text evidence="1">Belongs to the cytochrome b family. PetD subfamily.</text>
</comment>
<evidence type="ECO:0000255" key="1">
    <source>
        <dbReference type="HAMAP-Rule" id="MF_01344"/>
    </source>
</evidence>
<name>PETD_CROS5</name>
<sequence>MAIEKKPDLSDPKLRAKLAQGMGHNYYGEPAWPNDLLYVFPVVILGTIGLLVGLAVLDPALIGEPADPFATPLEILPEWYLYPVFQILRVLPNKLLGIACQGAIPLGLLLVPFIESVNKFQNPFRRPIATAVFLFGTVVTIWLGAGATFPIDESLTLGLF</sequence>
<gene>
    <name evidence="1" type="primary">petD</name>
    <name type="ordered locus">cce_1384</name>
</gene>
<feature type="chain" id="PRO_1000166451" description="Cytochrome b6-f complex subunit 4">
    <location>
        <begin position="1"/>
        <end position="160"/>
    </location>
</feature>
<feature type="transmembrane region" description="Helical" evidence="1">
    <location>
        <begin position="36"/>
        <end position="56"/>
    </location>
</feature>
<feature type="transmembrane region" description="Helical" evidence="1">
    <location>
        <begin position="95"/>
        <end position="115"/>
    </location>
</feature>
<feature type="transmembrane region" description="Helical" evidence="1">
    <location>
        <begin position="131"/>
        <end position="151"/>
    </location>
</feature>
<reference key="1">
    <citation type="journal article" date="2008" name="Proc. Natl. Acad. Sci. U.S.A.">
        <title>The genome of Cyanothece 51142, a unicellular diazotrophic cyanobacterium important in the marine nitrogen cycle.</title>
        <authorList>
            <person name="Welsh E.A."/>
            <person name="Liberton M."/>
            <person name="Stoeckel J."/>
            <person name="Loh T."/>
            <person name="Elvitigala T."/>
            <person name="Wang C."/>
            <person name="Wollam A."/>
            <person name="Fulton R.S."/>
            <person name="Clifton S.W."/>
            <person name="Jacobs J.M."/>
            <person name="Aurora R."/>
            <person name="Ghosh B.K."/>
            <person name="Sherman L.A."/>
            <person name="Smith R.D."/>
            <person name="Wilson R.K."/>
            <person name="Pakrasi H.B."/>
        </authorList>
    </citation>
    <scope>NUCLEOTIDE SEQUENCE [LARGE SCALE GENOMIC DNA]</scope>
    <source>
        <strain>ATCC 51142 / BH68</strain>
    </source>
</reference>
<organism>
    <name type="scientific">Crocosphaera subtropica (strain ATCC 51142 / BH68)</name>
    <name type="common">Cyanothece sp. (strain ATCC 51142)</name>
    <dbReference type="NCBI Taxonomy" id="43989"/>
    <lineage>
        <taxon>Bacteria</taxon>
        <taxon>Bacillati</taxon>
        <taxon>Cyanobacteriota</taxon>
        <taxon>Cyanophyceae</taxon>
        <taxon>Oscillatoriophycideae</taxon>
        <taxon>Chroococcales</taxon>
        <taxon>Aphanothecaceae</taxon>
        <taxon>Crocosphaera</taxon>
        <taxon>Crocosphaera subtropica</taxon>
    </lineage>
</organism>
<dbReference type="EMBL" id="CP000806">
    <property type="protein sequence ID" value="ACB50734.1"/>
    <property type="molecule type" value="Genomic_DNA"/>
</dbReference>
<dbReference type="RefSeq" id="WP_008274614.1">
    <property type="nucleotide sequence ID" value="NC_010546.1"/>
</dbReference>
<dbReference type="SMR" id="B1WWL0"/>
<dbReference type="STRING" id="43989.cce_1384"/>
<dbReference type="KEGG" id="cyt:cce_1384"/>
<dbReference type="eggNOG" id="COG1290">
    <property type="taxonomic scope" value="Bacteria"/>
</dbReference>
<dbReference type="HOGENOM" id="CLU_112652_0_0_3"/>
<dbReference type="OrthoDB" id="529454at2"/>
<dbReference type="Proteomes" id="UP000001203">
    <property type="component" value="Chromosome circular"/>
</dbReference>
<dbReference type="GO" id="GO:0031676">
    <property type="term" value="C:plasma membrane-derived thylakoid membrane"/>
    <property type="evidence" value="ECO:0007669"/>
    <property type="project" value="UniProtKB-SubCell"/>
</dbReference>
<dbReference type="GO" id="GO:0045158">
    <property type="term" value="F:electron transporter, transferring electrons within cytochrome b6/f complex of photosystem II activity"/>
    <property type="evidence" value="ECO:0007669"/>
    <property type="project" value="UniProtKB-UniRule"/>
</dbReference>
<dbReference type="GO" id="GO:0045156">
    <property type="term" value="F:electron transporter, transferring electrons within the cyclic electron transport pathway of photosynthesis activity"/>
    <property type="evidence" value="ECO:0007669"/>
    <property type="project" value="InterPro"/>
</dbReference>
<dbReference type="GO" id="GO:0008121">
    <property type="term" value="F:ubiquinol-cytochrome-c reductase activity"/>
    <property type="evidence" value="ECO:0007669"/>
    <property type="project" value="TreeGrafter"/>
</dbReference>
<dbReference type="GO" id="GO:0009767">
    <property type="term" value="P:photosynthetic electron transport chain"/>
    <property type="evidence" value="ECO:0007669"/>
    <property type="project" value="InterPro"/>
</dbReference>
<dbReference type="CDD" id="cd00290">
    <property type="entry name" value="cytochrome_b_C"/>
    <property type="match status" value="1"/>
</dbReference>
<dbReference type="FunFam" id="1.10.287.980:FF:000001">
    <property type="entry name" value="Cytochrome b6-f complex subunit 4"/>
    <property type="match status" value="1"/>
</dbReference>
<dbReference type="FunFam" id="1.20.5.510:FF:000002">
    <property type="entry name" value="Cytochrome b6-f complex subunit 4"/>
    <property type="match status" value="1"/>
</dbReference>
<dbReference type="Gene3D" id="1.10.287.980">
    <property type="entry name" value="plastocyanin oxidoreductase"/>
    <property type="match status" value="1"/>
</dbReference>
<dbReference type="Gene3D" id="1.20.5.510">
    <property type="entry name" value="Single helix bin"/>
    <property type="match status" value="1"/>
</dbReference>
<dbReference type="HAMAP" id="MF_01344">
    <property type="entry name" value="Cytb6_f_subIV"/>
    <property type="match status" value="1"/>
</dbReference>
<dbReference type="InterPro" id="IPR005798">
    <property type="entry name" value="Cyt_b/b6_C"/>
</dbReference>
<dbReference type="InterPro" id="IPR036150">
    <property type="entry name" value="Cyt_b/b6_C_sf"/>
</dbReference>
<dbReference type="InterPro" id="IPR005870">
    <property type="entry name" value="Cyt_b6/f_cplx_suIV"/>
</dbReference>
<dbReference type="InterPro" id="IPR048260">
    <property type="entry name" value="Cytochrome_b_C_euk/bac"/>
</dbReference>
<dbReference type="NCBIfam" id="TIGR01156">
    <property type="entry name" value="cytb6_f_IV"/>
    <property type="match status" value="1"/>
</dbReference>
<dbReference type="PANTHER" id="PTHR19271">
    <property type="entry name" value="CYTOCHROME B"/>
    <property type="match status" value="1"/>
</dbReference>
<dbReference type="PANTHER" id="PTHR19271:SF41">
    <property type="entry name" value="CYTOCHROME B_B6 C-TERMINAL REGION PROFILE DOMAIN-CONTAINING PROTEIN"/>
    <property type="match status" value="1"/>
</dbReference>
<dbReference type="Pfam" id="PF00032">
    <property type="entry name" value="Cytochrom_B_C"/>
    <property type="match status" value="1"/>
</dbReference>
<dbReference type="PIRSF" id="PIRSF000033">
    <property type="entry name" value="B6f_17K"/>
    <property type="match status" value="1"/>
</dbReference>
<dbReference type="SUPFAM" id="SSF81648">
    <property type="entry name" value="a domain/subunit of cytochrome bc1 complex (Ubiquinol-cytochrome c reductase)"/>
    <property type="match status" value="1"/>
</dbReference>
<dbReference type="PROSITE" id="PS51003">
    <property type="entry name" value="CYTB_CTER"/>
    <property type="match status" value="1"/>
</dbReference>
<accession>B1WWL0</accession>
<protein>
    <recommendedName>
        <fullName evidence="1">Cytochrome b6-f complex subunit 4</fullName>
    </recommendedName>
    <alternativeName>
        <fullName evidence="1">17 kDa polypeptide</fullName>
    </alternativeName>
</protein>
<keyword id="KW-0249">Electron transport</keyword>
<keyword id="KW-0472">Membrane</keyword>
<keyword id="KW-0602">Photosynthesis</keyword>
<keyword id="KW-1185">Reference proteome</keyword>
<keyword id="KW-0793">Thylakoid</keyword>
<keyword id="KW-0812">Transmembrane</keyword>
<keyword id="KW-1133">Transmembrane helix</keyword>
<keyword id="KW-0813">Transport</keyword>
<proteinExistence type="inferred from homology"/>